<accession>Q6FFK3</accession>
<proteinExistence type="inferred from homology"/>
<dbReference type="EMBL" id="CR543861">
    <property type="protein sequence ID" value="CAG67154.1"/>
    <property type="molecule type" value="Genomic_DNA"/>
</dbReference>
<dbReference type="RefSeq" id="WP_004930544.1">
    <property type="nucleotide sequence ID" value="NC_005966.1"/>
</dbReference>
<dbReference type="SMR" id="Q6FFK3"/>
<dbReference type="STRING" id="202950.GCA_001485005_01914"/>
<dbReference type="GeneID" id="45232699"/>
<dbReference type="KEGG" id="aci:ACIAD0184"/>
<dbReference type="eggNOG" id="COG0712">
    <property type="taxonomic scope" value="Bacteria"/>
</dbReference>
<dbReference type="HOGENOM" id="CLU_085114_3_0_6"/>
<dbReference type="OrthoDB" id="9816221at2"/>
<dbReference type="BioCyc" id="ASP62977:ACIAD_RS00850-MONOMER"/>
<dbReference type="Proteomes" id="UP000000430">
    <property type="component" value="Chromosome"/>
</dbReference>
<dbReference type="GO" id="GO:0005886">
    <property type="term" value="C:plasma membrane"/>
    <property type="evidence" value="ECO:0007669"/>
    <property type="project" value="UniProtKB-SubCell"/>
</dbReference>
<dbReference type="GO" id="GO:0045259">
    <property type="term" value="C:proton-transporting ATP synthase complex"/>
    <property type="evidence" value="ECO:0007669"/>
    <property type="project" value="UniProtKB-KW"/>
</dbReference>
<dbReference type="GO" id="GO:0046933">
    <property type="term" value="F:proton-transporting ATP synthase activity, rotational mechanism"/>
    <property type="evidence" value="ECO:0007669"/>
    <property type="project" value="UniProtKB-UniRule"/>
</dbReference>
<dbReference type="Gene3D" id="1.10.520.20">
    <property type="entry name" value="N-terminal domain of the delta subunit of the F1F0-ATP synthase"/>
    <property type="match status" value="1"/>
</dbReference>
<dbReference type="HAMAP" id="MF_01416">
    <property type="entry name" value="ATP_synth_delta_bact"/>
    <property type="match status" value="1"/>
</dbReference>
<dbReference type="InterPro" id="IPR026015">
    <property type="entry name" value="ATP_synth_OSCP/delta_N_sf"/>
</dbReference>
<dbReference type="InterPro" id="IPR020781">
    <property type="entry name" value="ATPase_OSCP/d_CS"/>
</dbReference>
<dbReference type="InterPro" id="IPR000711">
    <property type="entry name" value="ATPase_OSCP/dsu"/>
</dbReference>
<dbReference type="NCBIfam" id="TIGR01145">
    <property type="entry name" value="ATP_synt_delta"/>
    <property type="match status" value="1"/>
</dbReference>
<dbReference type="NCBIfam" id="NF004402">
    <property type="entry name" value="PRK05758.2-2"/>
    <property type="match status" value="1"/>
</dbReference>
<dbReference type="PANTHER" id="PTHR11910">
    <property type="entry name" value="ATP SYNTHASE DELTA CHAIN"/>
    <property type="match status" value="1"/>
</dbReference>
<dbReference type="Pfam" id="PF00213">
    <property type="entry name" value="OSCP"/>
    <property type="match status" value="1"/>
</dbReference>
<dbReference type="PRINTS" id="PR00125">
    <property type="entry name" value="ATPASEDELTA"/>
</dbReference>
<dbReference type="SUPFAM" id="SSF47928">
    <property type="entry name" value="N-terminal domain of the delta subunit of the F1F0-ATP synthase"/>
    <property type="match status" value="1"/>
</dbReference>
<dbReference type="PROSITE" id="PS00389">
    <property type="entry name" value="ATPASE_DELTA"/>
    <property type="match status" value="1"/>
</dbReference>
<name>ATPD_ACIAD</name>
<sequence>MAELLTLARPYAKAAFAYASEQGATDNWSTALQVLSAAVQDEAFSAYLNRPELTPSEQVELFAKILGEDQSQAVSNFLTLLADNDRLILLPEIAEEYEELKSQNNNVVDVVIESAFPLSAEQEQLLKTALEKRYNSSVTISVEVKPALIAGVVIRAGDQVIDDSALNKLEKMRTRLLA</sequence>
<organism>
    <name type="scientific">Acinetobacter baylyi (strain ATCC 33305 / BD413 / ADP1)</name>
    <dbReference type="NCBI Taxonomy" id="62977"/>
    <lineage>
        <taxon>Bacteria</taxon>
        <taxon>Pseudomonadati</taxon>
        <taxon>Pseudomonadota</taxon>
        <taxon>Gammaproteobacteria</taxon>
        <taxon>Moraxellales</taxon>
        <taxon>Moraxellaceae</taxon>
        <taxon>Acinetobacter</taxon>
    </lineage>
</organism>
<keyword id="KW-0066">ATP synthesis</keyword>
<keyword id="KW-0997">Cell inner membrane</keyword>
<keyword id="KW-1003">Cell membrane</keyword>
<keyword id="KW-0139">CF(1)</keyword>
<keyword id="KW-0375">Hydrogen ion transport</keyword>
<keyword id="KW-0406">Ion transport</keyword>
<keyword id="KW-0472">Membrane</keyword>
<keyword id="KW-0813">Transport</keyword>
<evidence type="ECO:0000255" key="1">
    <source>
        <dbReference type="HAMAP-Rule" id="MF_01416"/>
    </source>
</evidence>
<feature type="chain" id="PRO_0000370870" description="ATP synthase subunit delta">
    <location>
        <begin position="1"/>
        <end position="178"/>
    </location>
</feature>
<comment type="function">
    <text evidence="1">F(1)F(0) ATP synthase produces ATP from ADP in the presence of a proton or sodium gradient. F-type ATPases consist of two structural domains, F(1) containing the extramembraneous catalytic core and F(0) containing the membrane proton channel, linked together by a central stalk and a peripheral stalk. During catalysis, ATP synthesis in the catalytic domain of F(1) is coupled via a rotary mechanism of the central stalk subunits to proton translocation.</text>
</comment>
<comment type="function">
    <text evidence="1">This protein is part of the stalk that links CF(0) to CF(1). It either transmits conformational changes from CF(0) to CF(1) or is implicated in proton conduction.</text>
</comment>
<comment type="subunit">
    <text evidence="1">F-type ATPases have 2 components, F(1) - the catalytic core - and F(0) - the membrane proton channel. F(1) has five subunits: alpha(3), beta(3), gamma(1), delta(1), epsilon(1). F(0) has three main subunits: a(1), b(2) and c(10-14). The alpha and beta chains form an alternating ring which encloses part of the gamma chain. F(1) is attached to F(0) by a central stalk formed by the gamma and epsilon chains, while a peripheral stalk is formed by the delta and b chains.</text>
</comment>
<comment type="subcellular location">
    <subcellularLocation>
        <location evidence="1">Cell inner membrane</location>
        <topology evidence="1">Peripheral membrane protein</topology>
    </subcellularLocation>
</comment>
<comment type="similarity">
    <text evidence="1">Belongs to the ATPase delta chain family.</text>
</comment>
<reference key="1">
    <citation type="journal article" date="2004" name="Nucleic Acids Res.">
        <title>Unique features revealed by the genome sequence of Acinetobacter sp. ADP1, a versatile and naturally transformation competent bacterium.</title>
        <authorList>
            <person name="Barbe V."/>
            <person name="Vallenet D."/>
            <person name="Fonknechten N."/>
            <person name="Kreimeyer A."/>
            <person name="Oztas S."/>
            <person name="Labarre L."/>
            <person name="Cruveiller S."/>
            <person name="Robert C."/>
            <person name="Duprat S."/>
            <person name="Wincker P."/>
            <person name="Ornston L.N."/>
            <person name="Weissenbach J."/>
            <person name="Marliere P."/>
            <person name="Cohen G.N."/>
            <person name="Medigue C."/>
        </authorList>
    </citation>
    <scope>NUCLEOTIDE SEQUENCE [LARGE SCALE GENOMIC DNA]</scope>
    <source>
        <strain>ATCC 33305 / BD413 / ADP1</strain>
    </source>
</reference>
<gene>
    <name evidence="1" type="primary">atpH</name>
    <name type="ordered locus">ACIAD0184</name>
</gene>
<protein>
    <recommendedName>
        <fullName evidence="1">ATP synthase subunit delta</fullName>
    </recommendedName>
    <alternativeName>
        <fullName evidence="1">ATP synthase F(1) sector subunit delta</fullName>
    </alternativeName>
    <alternativeName>
        <fullName evidence="1">F-type ATPase subunit delta</fullName>
        <shortName evidence="1">F-ATPase subunit delta</shortName>
    </alternativeName>
</protein>